<keyword id="KW-0158">Chromosome</keyword>
<keyword id="KW-0227">DNA damage</keyword>
<keyword id="KW-0234">DNA repair</keyword>
<keyword id="KW-0378">Hydrolase</keyword>
<keyword id="KW-0479">Metal-binding</keyword>
<keyword id="KW-0645">Protease</keyword>
<keyword id="KW-1185">Reference proteome</keyword>
<keyword id="KW-0788">Thiol protease</keyword>
<keyword id="KW-0833">Ubl conjugation pathway</keyword>
<keyword id="KW-0862">Zinc</keyword>
<keyword id="KW-0863">Zinc-finger</keyword>
<protein>
    <recommendedName>
        <fullName evidence="6">Ubiquitin carboxyl-terminal hydrolase 51</fullName>
        <ecNumber evidence="5">3.4.19.12</ecNumber>
    </recommendedName>
    <alternativeName>
        <fullName>Deubiquitinating enzyme 51</fullName>
    </alternativeName>
</protein>
<sequence length="661" mass="74783">MRGTQGAQEMKPELWPEPKPTSENLTSRGSGSYEKVLPSIPAACHTSSSSVCPRRKPRPRPQPRSRSRGGRGLKAPPPPPAKPPPPPPAPPPPPLPKQRSVAWRNSRRRSRPGPRPQTRKSYSSDHGSSRDSDGSENSLLEVGSNKGPTGCCHVESFKVAKNWQRNLRMIYQRFIWSGTPETRKRKAKSCICQICSTHKNRLHSCLSCVFFGCFTDKHIHIHAETTQHNLAVDLCHGVIYCFMCRDYVYDKDIEKIAKETKEKILGLLSSPTGDASYQQLMASEVEENQLTCESKDQETSLVKPKKKRRKKTMYYTVGFRGLINLGNTCFMNCIVQVLTHIPLLKEFFLSNKHKCMMTSPSLCLVCEMSLLFQAMYSGNQSPHIPYKLLHLIWIHAEHLAGYRQQDAQEFLIAILDVLHRHSRDDGIDQEGNSNCCNCIIDHIFTGSLQSDLTCQVCHGVSTTIDPCWDISLDLPGPYTPGRASSSTSSRDGQKPRVISLTDCLKWFTRPEDLGSSAKIKCSQCQSYQESTKQLTMKKLPIVACFHLKRFEHLGKQRRKINSFISFPLELDMTPFLASTKESIMKGQPLTECVPSENKYSLFAVINHHGTLESGHYTSFVRQEKDQWFSCDDAVVTKATMEELLNSEGYLLFYHRQDIEKE</sequence>
<organism>
    <name type="scientific">Mus musculus</name>
    <name type="common">Mouse</name>
    <dbReference type="NCBI Taxonomy" id="10090"/>
    <lineage>
        <taxon>Eukaryota</taxon>
        <taxon>Metazoa</taxon>
        <taxon>Chordata</taxon>
        <taxon>Craniata</taxon>
        <taxon>Vertebrata</taxon>
        <taxon>Euteleostomi</taxon>
        <taxon>Mammalia</taxon>
        <taxon>Eutheria</taxon>
        <taxon>Euarchontoglires</taxon>
        <taxon>Glires</taxon>
        <taxon>Rodentia</taxon>
        <taxon>Myomorpha</taxon>
        <taxon>Muroidea</taxon>
        <taxon>Muridae</taxon>
        <taxon>Murinae</taxon>
        <taxon>Mus</taxon>
        <taxon>Mus</taxon>
    </lineage>
</organism>
<feature type="chain" id="PRO_0000441892" description="Ubiquitin carboxyl-terminal hydrolase 51">
    <location>
        <begin position="1"/>
        <end position="661"/>
    </location>
</feature>
<feature type="domain" description="USP" evidence="3">
    <location>
        <begin position="320"/>
        <end position="656"/>
    </location>
</feature>
<feature type="zinc finger region" description="UBP-type" evidence="2">
    <location>
        <begin position="149"/>
        <end position="267"/>
    </location>
</feature>
<feature type="region of interest" description="Disordered" evidence="4">
    <location>
        <begin position="1"/>
        <end position="144"/>
    </location>
</feature>
<feature type="compositionally biased region" description="Polar residues" evidence="4">
    <location>
        <begin position="21"/>
        <end position="30"/>
    </location>
</feature>
<feature type="compositionally biased region" description="Basic residues" evidence="4">
    <location>
        <begin position="53"/>
        <end position="71"/>
    </location>
</feature>
<feature type="compositionally biased region" description="Pro residues" evidence="4">
    <location>
        <begin position="75"/>
        <end position="96"/>
    </location>
</feature>
<feature type="active site" description="Nucleophile" evidence="3 5">
    <location>
        <position position="329"/>
    </location>
</feature>
<feature type="active site" description="Proton acceptor" evidence="3 5">
    <location>
        <position position="615"/>
    </location>
</feature>
<feature type="binding site" evidence="2">
    <location>
        <position position="151"/>
    </location>
    <ligand>
        <name>Zn(2+)</name>
        <dbReference type="ChEBI" id="CHEBI:29105"/>
        <label>1</label>
    </ligand>
</feature>
<feature type="binding site" evidence="2">
    <location>
        <position position="153"/>
    </location>
    <ligand>
        <name>Zn(2+)</name>
        <dbReference type="ChEBI" id="CHEBI:29105"/>
        <label>1</label>
    </ligand>
</feature>
<feature type="binding site" evidence="2">
    <location>
        <position position="192"/>
    </location>
    <ligand>
        <name>Zn(2+)</name>
        <dbReference type="ChEBI" id="CHEBI:29105"/>
        <label>2</label>
    </ligand>
</feature>
<feature type="binding site" evidence="2">
    <location>
        <position position="195"/>
    </location>
    <ligand>
        <name>Zn(2+)</name>
        <dbReference type="ChEBI" id="CHEBI:29105"/>
        <label>2</label>
    </ligand>
</feature>
<feature type="binding site" evidence="2">
    <location>
        <position position="205"/>
    </location>
    <ligand>
        <name>Zn(2+)</name>
        <dbReference type="ChEBI" id="CHEBI:29105"/>
        <label>3</label>
    </ligand>
</feature>
<feature type="binding site" evidence="2">
    <location>
        <position position="208"/>
    </location>
    <ligand>
        <name>Zn(2+)</name>
        <dbReference type="ChEBI" id="CHEBI:29105"/>
        <label>3</label>
    </ligand>
</feature>
<feature type="binding site" evidence="2">
    <location>
        <position position="213"/>
    </location>
    <ligand>
        <name>Zn(2+)</name>
        <dbReference type="ChEBI" id="CHEBI:29105"/>
        <label>2</label>
    </ligand>
</feature>
<feature type="binding site" evidence="2">
    <location>
        <position position="218"/>
    </location>
    <ligand>
        <name>Zn(2+)</name>
        <dbReference type="ChEBI" id="CHEBI:29105"/>
        <label>2</label>
    </ligand>
</feature>
<feature type="binding site" evidence="2">
    <location>
        <position position="222"/>
    </location>
    <ligand>
        <name>Zn(2+)</name>
        <dbReference type="ChEBI" id="CHEBI:29105"/>
        <label>3</label>
    </ligand>
</feature>
<feature type="binding site" evidence="2">
    <location>
        <position position="228"/>
    </location>
    <ligand>
        <name>Zn(2+)</name>
        <dbReference type="ChEBI" id="CHEBI:29105"/>
        <label>3</label>
    </ligand>
</feature>
<feature type="binding site" evidence="2">
    <location>
        <position position="241"/>
    </location>
    <ligand>
        <name>Zn(2+)</name>
        <dbReference type="ChEBI" id="CHEBI:29105"/>
        <label>1</label>
    </ligand>
</feature>
<feature type="binding site" evidence="2">
    <location>
        <position position="244"/>
    </location>
    <ligand>
        <name>Zn(2+)</name>
        <dbReference type="ChEBI" id="CHEBI:29105"/>
        <label>1</label>
    </ligand>
</feature>
<feature type="mutagenesis site" description="Abolishes ability to deubiquitinate histone H2A; when associated with R-615." evidence="5">
    <original>C</original>
    <variation>S</variation>
    <location>
        <position position="329"/>
    </location>
</feature>
<feature type="mutagenesis site" description="Abolishes ability to deubiquitinate histone H2A; when associated with S-329." evidence="5">
    <original>H</original>
    <variation>R</variation>
    <location>
        <position position="615"/>
    </location>
</feature>
<dbReference type="EC" id="3.4.19.12" evidence="5"/>
<dbReference type="EMBL" id="AL840632">
    <property type="status" value="NOT_ANNOTATED_CDS"/>
    <property type="molecule type" value="Genomic_DNA"/>
</dbReference>
<dbReference type="CCDS" id="CCDS53226.1"/>
<dbReference type="RefSeq" id="NP_001131019.1">
    <property type="nucleotide sequence ID" value="NM_001137547.1"/>
</dbReference>
<dbReference type="SMR" id="B1AY15"/>
<dbReference type="FunCoup" id="B1AY15">
    <property type="interactions" value="34"/>
</dbReference>
<dbReference type="STRING" id="10090.ENSMUSP00000093427"/>
<dbReference type="MEROPS" id="C19.065"/>
<dbReference type="PhosphoSitePlus" id="B1AY15"/>
<dbReference type="PaxDb" id="10090-ENSMUSP00000093427"/>
<dbReference type="Antibodypedia" id="52206">
    <property type="antibodies" value="35 antibodies from 19 providers"/>
</dbReference>
<dbReference type="Ensembl" id="ENSMUST00000095755.4">
    <property type="protein sequence ID" value="ENSMUSP00000093427.4"/>
    <property type="gene ID" value="ENSMUSG00000067215.6"/>
</dbReference>
<dbReference type="GeneID" id="635253"/>
<dbReference type="KEGG" id="mmu:635253"/>
<dbReference type="UCSC" id="uc009uqp.2">
    <property type="organism name" value="mouse"/>
</dbReference>
<dbReference type="AGR" id="MGI:3588217"/>
<dbReference type="CTD" id="158880"/>
<dbReference type="MGI" id="MGI:3588217">
    <property type="gene designation" value="Usp51"/>
</dbReference>
<dbReference type="VEuPathDB" id="HostDB:ENSMUSG00000067215"/>
<dbReference type="eggNOG" id="KOG1867">
    <property type="taxonomic scope" value="Eukaryota"/>
</dbReference>
<dbReference type="GeneTree" id="ENSGT00940000163664"/>
<dbReference type="HOGENOM" id="CLU_008279_11_0_1"/>
<dbReference type="InParanoid" id="B1AY15"/>
<dbReference type="OMA" id="WLLEVDF"/>
<dbReference type="OrthoDB" id="47475at2759"/>
<dbReference type="PhylomeDB" id="B1AY15"/>
<dbReference type="TreeFam" id="TF323554"/>
<dbReference type="BioGRID-ORCS" id="635253">
    <property type="hits" value="4 hits in 77 CRISPR screens"/>
</dbReference>
<dbReference type="PRO" id="PR:B1AY15"/>
<dbReference type="Proteomes" id="UP000000589">
    <property type="component" value="Chromosome X"/>
</dbReference>
<dbReference type="RNAct" id="B1AY15">
    <property type="molecule type" value="protein"/>
</dbReference>
<dbReference type="Bgee" id="ENSMUSG00000067215">
    <property type="expression patterns" value="Expressed in yolk sac and 42 other cell types or tissues"/>
</dbReference>
<dbReference type="GO" id="GO:0005694">
    <property type="term" value="C:chromosome"/>
    <property type="evidence" value="ECO:0007669"/>
    <property type="project" value="UniProtKB-SubCell"/>
</dbReference>
<dbReference type="GO" id="GO:0003682">
    <property type="term" value="F:chromatin binding"/>
    <property type="evidence" value="ECO:0000250"/>
    <property type="project" value="UniProtKB"/>
</dbReference>
<dbReference type="GO" id="GO:0004843">
    <property type="term" value="F:cysteine-type deubiquitinase activity"/>
    <property type="evidence" value="ECO:0007669"/>
    <property type="project" value="UniProtKB-EC"/>
</dbReference>
<dbReference type="GO" id="GO:0042393">
    <property type="term" value="F:histone binding"/>
    <property type="evidence" value="ECO:0000250"/>
    <property type="project" value="UniProtKB"/>
</dbReference>
<dbReference type="GO" id="GO:0140950">
    <property type="term" value="F:histone H2A deubiquitinase activity"/>
    <property type="evidence" value="ECO:0000250"/>
    <property type="project" value="UniProtKB"/>
</dbReference>
<dbReference type="GO" id="GO:0008270">
    <property type="term" value="F:zinc ion binding"/>
    <property type="evidence" value="ECO:0007669"/>
    <property type="project" value="UniProtKB-KW"/>
</dbReference>
<dbReference type="GO" id="GO:0006974">
    <property type="term" value="P:DNA damage response"/>
    <property type="evidence" value="ECO:0000250"/>
    <property type="project" value="UniProtKB"/>
</dbReference>
<dbReference type="GO" id="GO:0006281">
    <property type="term" value="P:DNA repair"/>
    <property type="evidence" value="ECO:0007669"/>
    <property type="project" value="UniProtKB-KW"/>
</dbReference>
<dbReference type="GO" id="GO:0140861">
    <property type="term" value="P:DNA repair-dependent chromatin remodeling"/>
    <property type="evidence" value="ECO:0007669"/>
    <property type="project" value="Ensembl"/>
</dbReference>
<dbReference type="GO" id="GO:0016579">
    <property type="term" value="P:protein deubiquitination"/>
    <property type="evidence" value="ECO:0007669"/>
    <property type="project" value="InterPro"/>
</dbReference>
<dbReference type="GO" id="GO:0006508">
    <property type="term" value="P:proteolysis"/>
    <property type="evidence" value="ECO:0007669"/>
    <property type="project" value="UniProtKB-KW"/>
</dbReference>
<dbReference type="GO" id="GO:0010564">
    <property type="term" value="P:regulation of cell cycle process"/>
    <property type="evidence" value="ECO:0007669"/>
    <property type="project" value="Ensembl"/>
</dbReference>
<dbReference type="GO" id="GO:0010569">
    <property type="term" value="P:regulation of double-strand break repair via homologous recombination"/>
    <property type="evidence" value="ECO:0007669"/>
    <property type="project" value="Ensembl"/>
</dbReference>
<dbReference type="GO" id="GO:2001032">
    <property type="term" value="P:regulation of double-strand break repair via nonhomologous end joining"/>
    <property type="evidence" value="ECO:0007669"/>
    <property type="project" value="Ensembl"/>
</dbReference>
<dbReference type="CDD" id="cd02660">
    <property type="entry name" value="Peptidase_C19D"/>
    <property type="match status" value="1"/>
</dbReference>
<dbReference type="FunFam" id="3.30.40.10:FF:000141">
    <property type="entry name" value="Ubiquitinyl hydrolase 1"/>
    <property type="match status" value="1"/>
</dbReference>
<dbReference type="FunFam" id="3.90.70.10:FF:000011">
    <property type="entry name" value="Ubiquitinyl hydrolase 1"/>
    <property type="match status" value="1"/>
</dbReference>
<dbReference type="Gene3D" id="3.90.70.10">
    <property type="entry name" value="Cysteine proteinases"/>
    <property type="match status" value="1"/>
</dbReference>
<dbReference type="Gene3D" id="3.30.40.10">
    <property type="entry name" value="Zinc/RING finger domain, C3HC4 (zinc finger)"/>
    <property type="match status" value="1"/>
</dbReference>
<dbReference type="InterPro" id="IPR038765">
    <property type="entry name" value="Papain-like_cys_pep_sf"/>
</dbReference>
<dbReference type="InterPro" id="IPR001394">
    <property type="entry name" value="Peptidase_C19_UCH"/>
</dbReference>
<dbReference type="InterPro" id="IPR050185">
    <property type="entry name" value="Ub_carboxyl-term_hydrolase"/>
</dbReference>
<dbReference type="InterPro" id="IPR018200">
    <property type="entry name" value="USP_CS"/>
</dbReference>
<dbReference type="InterPro" id="IPR028889">
    <property type="entry name" value="USP_dom"/>
</dbReference>
<dbReference type="InterPro" id="IPR013083">
    <property type="entry name" value="Znf_RING/FYVE/PHD"/>
</dbReference>
<dbReference type="InterPro" id="IPR001607">
    <property type="entry name" value="Znf_UBP"/>
</dbReference>
<dbReference type="PANTHER" id="PTHR21646">
    <property type="entry name" value="UBIQUITIN CARBOXYL-TERMINAL HYDROLASE"/>
    <property type="match status" value="1"/>
</dbReference>
<dbReference type="PANTHER" id="PTHR21646:SF38">
    <property type="entry name" value="UBIQUITIN CARBOXYL-TERMINAL HYDROLASE 51"/>
    <property type="match status" value="1"/>
</dbReference>
<dbReference type="Pfam" id="PF00443">
    <property type="entry name" value="UCH"/>
    <property type="match status" value="1"/>
</dbReference>
<dbReference type="Pfam" id="PF02148">
    <property type="entry name" value="zf-UBP"/>
    <property type="match status" value="1"/>
</dbReference>
<dbReference type="SUPFAM" id="SSF54001">
    <property type="entry name" value="Cysteine proteinases"/>
    <property type="match status" value="1"/>
</dbReference>
<dbReference type="SUPFAM" id="SSF101447">
    <property type="entry name" value="Formin homology 2 domain (FH2 domain)"/>
    <property type="match status" value="1"/>
</dbReference>
<dbReference type="SUPFAM" id="SSF57850">
    <property type="entry name" value="RING/U-box"/>
    <property type="match status" value="1"/>
</dbReference>
<dbReference type="PROSITE" id="PS00972">
    <property type="entry name" value="USP_1"/>
    <property type="match status" value="1"/>
</dbReference>
<dbReference type="PROSITE" id="PS00973">
    <property type="entry name" value="USP_2"/>
    <property type="match status" value="1"/>
</dbReference>
<dbReference type="PROSITE" id="PS50235">
    <property type="entry name" value="USP_3"/>
    <property type="match status" value="1"/>
</dbReference>
<dbReference type="PROSITE" id="PS50271">
    <property type="entry name" value="ZF_UBP"/>
    <property type="match status" value="1"/>
</dbReference>
<reference key="1">
    <citation type="journal article" date="2009" name="PLoS Biol.">
        <title>Lineage-specific biology revealed by a finished genome assembly of the mouse.</title>
        <authorList>
            <person name="Church D.M."/>
            <person name="Goodstadt L."/>
            <person name="Hillier L.W."/>
            <person name="Zody M.C."/>
            <person name="Goldstein S."/>
            <person name="She X."/>
            <person name="Bult C.J."/>
            <person name="Agarwala R."/>
            <person name="Cherry J.L."/>
            <person name="DiCuccio M."/>
            <person name="Hlavina W."/>
            <person name="Kapustin Y."/>
            <person name="Meric P."/>
            <person name="Maglott D."/>
            <person name="Birtle Z."/>
            <person name="Marques A.C."/>
            <person name="Graves T."/>
            <person name="Zhou S."/>
            <person name="Teague B."/>
            <person name="Potamousis K."/>
            <person name="Churas C."/>
            <person name="Place M."/>
            <person name="Herschleb J."/>
            <person name="Runnheim R."/>
            <person name="Forrest D."/>
            <person name="Amos-Landgraf J."/>
            <person name="Schwartz D.C."/>
            <person name="Cheng Z."/>
            <person name="Lindblad-Toh K."/>
            <person name="Eichler E.E."/>
            <person name="Ponting C.P."/>
        </authorList>
    </citation>
    <scope>NUCLEOTIDE SEQUENCE [LARGE SCALE GENOMIC DNA]</scope>
    <source>
        <strain>C57BL/6J</strain>
    </source>
</reference>
<reference key="2">
    <citation type="journal article" date="2016" name="Genes Dev.">
        <title>USP51 deubiquitylates H2AK13,15ub and regulates DNA damage response.</title>
        <authorList>
            <person name="Wang Z."/>
            <person name="Zhang H."/>
            <person name="Liu J."/>
            <person name="Cheruiyot A."/>
            <person name="Lee J.H."/>
            <person name="Ordog T."/>
            <person name="Lou Z."/>
            <person name="You Z."/>
            <person name="Zhang Z."/>
        </authorList>
    </citation>
    <scope>FUNCTION</scope>
    <scope>ACTIVE SITE</scope>
    <scope>MUTAGENESIS OF CYS-329 AND HIS-615</scope>
    <scope>CATALYTIC ACTIVITY</scope>
</reference>
<gene>
    <name evidence="8" type="primary">Usp51</name>
</gene>
<accession>B1AY15</accession>
<proteinExistence type="evidence at protein level"/>
<evidence type="ECO:0000250" key="1">
    <source>
        <dbReference type="UniProtKB" id="Q70EK9"/>
    </source>
</evidence>
<evidence type="ECO:0000255" key="2">
    <source>
        <dbReference type="PROSITE-ProRule" id="PRU00502"/>
    </source>
</evidence>
<evidence type="ECO:0000255" key="3">
    <source>
        <dbReference type="PROSITE-ProRule" id="PRU01035"/>
    </source>
</evidence>
<evidence type="ECO:0000256" key="4">
    <source>
        <dbReference type="SAM" id="MobiDB-lite"/>
    </source>
</evidence>
<evidence type="ECO:0000269" key="5">
    <source>
    </source>
</evidence>
<evidence type="ECO:0000303" key="6">
    <source>
    </source>
</evidence>
<evidence type="ECO:0000305" key="7"/>
<evidence type="ECO:0000312" key="8">
    <source>
        <dbReference type="MGI" id="MGI:3588217"/>
    </source>
</evidence>
<name>UBP51_MOUSE</name>
<comment type="function">
    <text evidence="1 5">Specifically deubiquitinates 'Lys-14' (H2AK13Ub) and 'Lys-16'(H2AK15Ub) of histone H2A regulating the DNA damage response at double-strand breaks (DSBs). USP51 is recruited to chromatin after DNA damage and regulates the dynamic assembly/disassembly of TP53BP1 and BRCA1 (PubMed:27083998). Functions in DNA double-strand break repair also by mediating the deubiquitination and subsequent stabilization of DGCR8, leading to the recruitment of DGCR8 binding partners to double strand breaks such as RNF168 or MDC1. In addition, promotes the deubiquitination and stabilization of the transcriptional repressor ZEB1.</text>
</comment>
<comment type="catalytic activity">
    <reaction evidence="5">
        <text>Thiol-dependent hydrolysis of ester, thioester, amide, peptide and isopeptide bonds formed by the C-terminal Gly of ubiquitin (a 76-residue protein attached to proteins as an intracellular targeting signal).</text>
        <dbReference type="EC" id="3.4.19.12"/>
    </reaction>
</comment>
<comment type="subunit">
    <text evidence="1">Interacts with H2A.</text>
</comment>
<comment type="subcellular location">
    <subcellularLocation>
        <location evidence="1">Chromosome</location>
    </subcellularLocation>
    <text evidence="1">Dissociates from chromatin immediately after DNA damage and reassociates with chromatin following DNA repair.</text>
</comment>
<comment type="similarity">
    <text evidence="7">Belongs to the peptidase C19 family.</text>
</comment>